<reference key="1">
    <citation type="journal article" date="2002" name="J. Bacteriol.">
        <title>Whole-genome comparison of Mycobacterium tuberculosis clinical and laboratory strains.</title>
        <authorList>
            <person name="Fleischmann R.D."/>
            <person name="Alland D."/>
            <person name="Eisen J.A."/>
            <person name="Carpenter L."/>
            <person name="White O."/>
            <person name="Peterson J.D."/>
            <person name="DeBoy R.T."/>
            <person name="Dodson R.J."/>
            <person name="Gwinn M.L."/>
            <person name="Haft D.H."/>
            <person name="Hickey E.K."/>
            <person name="Kolonay J.F."/>
            <person name="Nelson W.C."/>
            <person name="Umayam L.A."/>
            <person name="Ermolaeva M.D."/>
            <person name="Salzberg S.L."/>
            <person name="Delcher A."/>
            <person name="Utterback T.R."/>
            <person name="Weidman J.F."/>
            <person name="Khouri H.M."/>
            <person name="Gill J."/>
            <person name="Mikula A."/>
            <person name="Bishai W."/>
            <person name="Jacobs W.R. Jr."/>
            <person name="Venter J.C."/>
            <person name="Fraser C.M."/>
        </authorList>
    </citation>
    <scope>NUCLEOTIDE SEQUENCE [LARGE SCALE GENOMIC DNA]</scope>
    <source>
        <strain>CDC 1551 / Oshkosh</strain>
    </source>
</reference>
<comment type="function">
    <text evidence="1">Catalyzes the alpha-1,2 addition of a mannose residue from polyprenol-phosphate-mannose (PPM) to a monoacyl phosphatidylinositol tetramannoside (AcPIM4) to generate a monoacyl phosphatidylinositol pentamannoside (AcPIM5).</text>
</comment>
<comment type="pathway">
    <text evidence="1">Phospholipid metabolism; phosphatidylinositol metabolism.</text>
</comment>
<comment type="subcellular location">
    <subcellularLocation>
        <location evidence="1">Cell membrane</location>
        <topology evidence="2">Multi-pass membrane protein</topology>
    </subcellularLocation>
</comment>
<comment type="similarity">
    <text evidence="3">Belongs to the glycosyltransferase 87 family.</text>
</comment>
<comment type="sequence caution" evidence="3">
    <conflict type="erroneous initiation">
        <sequence resource="EMBL-CDS" id="AAK45452"/>
    </conflict>
    <text>Extended N-terminus.</text>
</comment>
<proteinExistence type="inferred from homology"/>
<evidence type="ECO:0000250" key="1">
    <source>
        <dbReference type="UniProtKB" id="A0R2K8"/>
    </source>
</evidence>
<evidence type="ECO:0000255" key="2"/>
<evidence type="ECO:0000305" key="3"/>
<feature type="chain" id="PRO_0000427213" description="Polyprenol-phosphate-mannose-dependent alpha-(1-2)-phosphatidylinositol pentamannoside mannosyltransferase">
    <location>
        <begin position="1"/>
        <end position="431"/>
    </location>
</feature>
<feature type="transmembrane region" description="Helical" evidence="2">
    <location>
        <begin position="43"/>
        <end position="63"/>
    </location>
</feature>
<feature type="transmembrane region" description="Helical" evidence="2">
    <location>
        <begin position="108"/>
        <end position="128"/>
    </location>
</feature>
<feature type="transmembrane region" description="Helical" evidence="2">
    <location>
        <begin position="148"/>
        <end position="168"/>
    </location>
</feature>
<feature type="transmembrane region" description="Helical" evidence="2">
    <location>
        <begin position="175"/>
        <end position="195"/>
    </location>
</feature>
<feature type="transmembrane region" description="Helical" evidence="2">
    <location>
        <begin position="202"/>
        <end position="222"/>
    </location>
</feature>
<feature type="transmembrane region" description="Helical" evidence="2">
    <location>
        <begin position="229"/>
        <end position="249"/>
    </location>
</feature>
<feature type="transmembrane region" description="Helical" evidence="2">
    <location>
        <begin position="290"/>
        <end position="310"/>
    </location>
</feature>
<feature type="transmembrane region" description="Helical" evidence="2">
    <location>
        <begin position="332"/>
        <end position="352"/>
    </location>
</feature>
<feature type="transmembrane region" description="Helical" evidence="2">
    <location>
        <begin position="364"/>
        <end position="384"/>
    </location>
</feature>
<feature type="transmembrane region" description="Helical" evidence="2">
    <location>
        <begin position="397"/>
        <end position="417"/>
    </location>
</feature>
<gene>
    <name type="primary">pimE</name>
    <name type="ordered locus">MT1195</name>
</gene>
<sequence>MCRTLIDGPVRSAIAKVRQIDTTSSTPAAARRVTSPPARETRAAVLLLVLSVGARLAWTYLAPNGANFVDLHVYVSGAASLDHPGTLYGYVYADQTPDFPLPFTYPPFAAVVFYPLHLVPFGLIALLWQVVTMAALYGAVRISQRLMGGTAETGHFAAMLWTAIAIWIEPLRSTFDYGQINVLLMLAALWAVYTPRWWLSGLLVGVASGVKLTPAITAVYLVGVRRLHAAAFSVVVFLATVGVSLLVVGDEARYYFTDLLGDAGRVGPIATSFNQSWRGAISRILGHDAGFGPLVLAAIASTAVLAILAWRALDRSDRLGKLLVVELFGLLLSPISWTHHWVWLVPLMIWLIDGPARERPGARILGWGWLVLTIVGVPWLLSFAQPSIWQIGRPWYLAWAGLVYVVATLATLGWIAASERYVRIRPRRMAN</sequence>
<protein>
    <recommendedName>
        <fullName>Polyprenol-phosphate-mannose-dependent alpha-(1-2)-phosphatidylinositol pentamannoside mannosyltransferase</fullName>
        <ecNumber evidence="1">2.4.1.-</ecNumber>
    </recommendedName>
    <alternativeName>
        <fullName>Alpha-mannosyltransferase</fullName>
        <shortName>Alpha-ManT</shortName>
    </alternativeName>
    <alternativeName>
        <fullName>PPM-dependent mannosyltransferase</fullName>
    </alternativeName>
    <alternativeName>
        <fullName>Polyprenol-phosphate-mannose alpha-mannosyltransferase</fullName>
        <shortName>PPM alpha-mannosyltransferase</shortName>
    </alternativeName>
</protein>
<accession>P9WN00</accession>
<accession>L0T8L9</accession>
<accession>O06557</accession>
<accession>Q7D8R1</accession>
<keyword id="KW-1003">Cell membrane</keyword>
<keyword id="KW-0444">Lipid biosynthesis</keyword>
<keyword id="KW-0443">Lipid metabolism</keyword>
<keyword id="KW-0472">Membrane</keyword>
<keyword id="KW-0594">Phospholipid biosynthesis</keyword>
<keyword id="KW-1208">Phospholipid metabolism</keyword>
<keyword id="KW-1185">Reference proteome</keyword>
<keyword id="KW-0808">Transferase</keyword>
<keyword id="KW-0812">Transmembrane</keyword>
<keyword id="KW-1133">Transmembrane helix</keyword>
<name>PIME_MYCTO</name>
<dbReference type="EC" id="2.4.1.-" evidence="1"/>
<dbReference type="EMBL" id="AE000516">
    <property type="protein sequence ID" value="AAK45452.1"/>
    <property type="status" value="ALT_INIT"/>
    <property type="molecule type" value="Genomic_DNA"/>
</dbReference>
<dbReference type="PIR" id="H70555">
    <property type="entry name" value="H70555"/>
</dbReference>
<dbReference type="RefSeq" id="WP_003900282.1">
    <property type="nucleotide sequence ID" value="NZ_KK341227.1"/>
</dbReference>
<dbReference type="CAZy" id="GT87">
    <property type="family name" value="Glycosyltransferase Family 87"/>
</dbReference>
<dbReference type="KEGG" id="mtc:MT1195"/>
<dbReference type="PATRIC" id="fig|83331.31.peg.1295"/>
<dbReference type="HOGENOM" id="CLU_034641_1_0_11"/>
<dbReference type="UniPathway" id="UPA00949"/>
<dbReference type="Proteomes" id="UP000001020">
    <property type="component" value="Chromosome"/>
</dbReference>
<dbReference type="GO" id="GO:0005886">
    <property type="term" value="C:plasma membrane"/>
    <property type="evidence" value="ECO:0007669"/>
    <property type="project" value="UniProtKB-SubCell"/>
</dbReference>
<dbReference type="GO" id="GO:0016758">
    <property type="term" value="F:hexosyltransferase activity"/>
    <property type="evidence" value="ECO:0007669"/>
    <property type="project" value="InterPro"/>
</dbReference>
<dbReference type="GO" id="GO:0046488">
    <property type="term" value="P:phosphatidylinositol metabolic process"/>
    <property type="evidence" value="ECO:0007669"/>
    <property type="project" value="UniProtKB-UniPathway"/>
</dbReference>
<dbReference type="GO" id="GO:0008654">
    <property type="term" value="P:phospholipid biosynthetic process"/>
    <property type="evidence" value="ECO:0007669"/>
    <property type="project" value="UniProtKB-KW"/>
</dbReference>
<dbReference type="InterPro" id="IPR018584">
    <property type="entry name" value="GT87"/>
</dbReference>
<dbReference type="NCBIfam" id="NF009915">
    <property type="entry name" value="PRK13375.1"/>
    <property type="match status" value="1"/>
</dbReference>
<dbReference type="Pfam" id="PF09594">
    <property type="entry name" value="GT87"/>
    <property type="match status" value="1"/>
</dbReference>
<organism>
    <name type="scientific">Mycobacterium tuberculosis (strain CDC 1551 / Oshkosh)</name>
    <dbReference type="NCBI Taxonomy" id="83331"/>
    <lineage>
        <taxon>Bacteria</taxon>
        <taxon>Bacillati</taxon>
        <taxon>Actinomycetota</taxon>
        <taxon>Actinomycetes</taxon>
        <taxon>Mycobacteriales</taxon>
        <taxon>Mycobacteriaceae</taxon>
        <taxon>Mycobacterium</taxon>
        <taxon>Mycobacterium tuberculosis complex</taxon>
    </lineage>
</organism>